<evidence type="ECO:0000255" key="1">
    <source>
        <dbReference type="HAMAP-Rule" id="MF_01157"/>
    </source>
</evidence>
<feature type="chain" id="PRO_1000065542" description="DnaA initiator-associating protein DiaA">
    <location>
        <begin position="1"/>
        <end position="196"/>
    </location>
</feature>
<feature type="domain" description="SIS" evidence="1">
    <location>
        <begin position="34"/>
        <end position="196"/>
    </location>
</feature>
<name>DIAA_ECOUT</name>
<dbReference type="EMBL" id="CP000243">
    <property type="protein sequence ID" value="ABE09022.1"/>
    <property type="molecule type" value="Genomic_DNA"/>
</dbReference>
<dbReference type="RefSeq" id="WP_001158035.1">
    <property type="nucleotide sequence ID" value="NZ_CP064825.1"/>
</dbReference>
<dbReference type="SMR" id="Q1R6J2"/>
<dbReference type="GeneID" id="75206004"/>
<dbReference type="KEGG" id="eci:UTI89_C3576"/>
<dbReference type="HOGENOM" id="CLU_080999_3_1_6"/>
<dbReference type="Proteomes" id="UP000001952">
    <property type="component" value="Chromosome"/>
</dbReference>
<dbReference type="GO" id="GO:0097367">
    <property type="term" value="F:carbohydrate derivative binding"/>
    <property type="evidence" value="ECO:0007669"/>
    <property type="project" value="InterPro"/>
</dbReference>
<dbReference type="GO" id="GO:1901135">
    <property type="term" value="P:carbohydrate derivative metabolic process"/>
    <property type="evidence" value="ECO:0007669"/>
    <property type="project" value="InterPro"/>
</dbReference>
<dbReference type="GO" id="GO:0006260">
    <property type="term" value="P:DNA replication"/>
    <property type="evidence" value="ECO:0007669"/>
    <property type="project" value="UniProtKB-UniRule"/>
</dbReference>
<dbReference type="CDD" id="cd05006">
    <property type="entry name" value="SIS_GmhA"/>
    <property type="match status" value="1"/>
</dbReference>
<dbReference type="FunFam" id="3.40.50.10490:FF:000006">
    <property type="entry name" value="DnaA initiator-associating protein DiaA"/>
    <property type="match status" value="1"/>
</dbReference>
<dbReference type="Gene3D" id="3.40.50.10490">
    <property type="entry name" value="Glucose-6-phosphate isomerase like protein, domain 1"/>
    <property type="match status" value="1"/>
</dbReference>
<dbReference type="HAMAP" id="MF_01157">
    <property type="entry name" value="SIS_DiaA"/>
    <property type="match status" value="1"/>
</dbReference>
<dbReference type="InterPro" id="IPR023070">
    <property type="entry name" value="DiaA"/>
</dbReference>
<dbReference type="InterPro" id="IPR035461">
    <property type="entry name" value="GmhA/DiaA"/>
</dbReference>
<dbReference type="InterPro" id="IPR001347">
    <property type="entry name" value="SIS_dom"/>
</dbReference>
<dbReference type="InterPro" id="IPR046348">
    <property type="entry name" value="SIS_dom_sf"/>
</dbReference>
<dbReference type="InterPro" id="IPR050099">
    <property type="entry name" value="SIS_GmhA/DiaA_subfam"/>
</dbReference>
<dbReference type="NCBIfam" id="NF008138">
    <property type="entry name" value="PRK10886.1"/>
    <property type="match status" value="1"/>
</dbReference>
<dbReference type="NCBIfam" id="NF010546">
    <property type="entry name" value="PRK13936.1"/>
    <property type="match status" value="1"/>
</dbReference>
<dbReference type="PANTHER" id="PTHR30390:SF6">
    <property type="entry name" value="DNAA INITIATOR-ASSOCIATING PROTEIN DIAA"/>
    <property type="match status" value="1"/>
</dbReference>
<dbReference type="PANTHER" id="PTHR30390">
    <property type="entry name" value="SEDOHEPTULOSE 7-PHOSPHATE ISOMERASE / DNAA INITIATOR-ASSOCIATING FACTOR FOR REPLICATION INITIATION"/>
    <property type="match status" value="1"/>
</dbReference>
<dbReference type="Pfam" id="PF13580">
    <property type="entry name" value="SIS_2"/>
    <property type="match status" value="1"/>
</dbReference>
<dbReference type="SUPFAM" id="SSF53697">
    <property type="entry name" value="SIS domain"/>
    <property type="match status" value="1"/>
</dbReference>
<dbReference type="PROSITE" id="PS51464">
    <property type="entry name" value="SIS"/>
    <property type="match status" value="1"/>
</dbReference>
<comment type="function">
    <text evidence="1">Required for the timely initiation of chromosomal replication via direct interactions with the DnaA initiator protein.</text>
</comment>
<comment type="subunit">
    <text evidence="1">Homotetramer; dimer of dimers.</text>
</comment>
<comment type="similarity">
    <text evidence="1">Belongs to the SIS family. DiaA subfamily.</text>
</comment>
<proteinExistence type="inferred from homology"/>
<protein>
    <recommendedName>
        <fullName evidence="1">DnaA initiator-associating protein DiaA</fullName>
    </recommendedName>
</protein>
<accession>Q1R6J2</accession>
<keyword id="KW-0235">DNA replication</keyword>
<gene>
    <name evidence="1" type="primary">diaA</name>
    <name type="ordered locus">UTI89_C3576</name>
</gene>
<sequence>MQERIKACFTESIQTQIAAAEALPDAISRAAMTLVQSLLNGNKILCCGNGTSAANAQHFAASMINRFETERPSLPAIALNTDNVVLTAIANDRLHDEVYAKQVRALGHAGDVLLAISTRGNSRDIVKAVEAAVTRDMTIVALTGYDGGELAGLLGPQDVEIRIPSHRSARIQEMHMLTVNCLCDLIDNTLFPHQDV</sequence>
<reference key="1">
    <citation type="journal article" date="2006" name="Proc. Natl. Acad. Sci. U.S.A.">
        <title>Identification of genes subject to positive selection in uropathogenic strains of Escherichia coli: a comparative genomics approach.</title>
        <authorList>
            <person name="Chen S.L."/>
            <person name="Hung C.-S."/>
            <person name="Xu J."/>
            <person name="Reigstad C.S."/>
            <person name="Magrini V."/>
            <person name="Sabo A."/>
            <person name="Blasiar D."/>
            <person name="Bieri T."/>
            <person name="Meyer R.R."/>
            <person name="Ozersky P."/>
            <person name="Armstrong J.R."/>
            <person name="Fulton R.S."/>
            <person name="Latreille J.P."/>
            <person name="Spieth J."/>
            <person name="Hooton T.M."/>
            <person name="Mardis E.R."/>
            <person name="Hultgren S.J."/>
            <person name="Gordon J.I."/>
        </authorList>
    </citation>
    <scope>NUCLEOTIDE SEQUENCE [LARGE SCALE GENOMIC DNA]</scope>
    <source>
        <strain>UTI89 / UPEC</strain>
    </source>
</reference>
<organism>
    <name type="scientific">Escherichia coli (strain UTI89 / UPEC)</name>
    <dbReference type="NCBI Taxonomy" id="364106"/>
    <lineage>
        <taxon>Bacteria</taxon>
        <taxon>Pseudomonadati</taxon>
        <taxon>Pseudomonadota</taxon>
        <taxon>Gammaproteobacteria</taxon>
        <taxon>Enterobacterales</taxon>
        <taxon>Enterobacteriaceae</taxon>
        <taxon>Escherichia</taxon>
    </lineage>
</organism>